<proteinExistence type="inferred from homology"/>
<gene>
    <name evidence="1" type="primary">ackA</name>
    <name type="ordered locus">SaurJH1_1802</name>
</gene>
<keyword id="KW-0067">ATP-binding</keyword>
<keyword id="KW-0963">Cytoplasm</keyword>
<keyword id="KW-0418">Kinase</keyword>
<keyword id="KW-0460">Magnesium</keyword>
<keyword id="KW-0479">Metal-binding</keyword>
<keyword id="KW-0547">Nucleotide-binding</keyword>
<keyword id="KW-0808">Transferase</keyword>
<protein>
    <recommendedName>
        <fullName evidence="1">Acetate kinase</fullName>
        <ecNumber evidence="1">2.7.2.1</ecNumber>
    </recommendedName>
    <alternativeName>
        <fullName evidence="1">Acetokinase</fullName>
    </alternativeName>
</protein>
<dbReference type="EC" id="2.7.2.1" evidence="1"/>
<dbReference type="EMBL" id="CP000736">
    <property type="protein sequence ID" value="ABR52646.1"/>
    <property type="molecule type" value="Genomic_DNA"/>
</dbReference>
<dbReference type="SMR" id="A6U2H8"/>
<dbReference type="KEGG" id="sah:SaurJH1_1802"/>
<dbReference type="HOGENOM" id="CLU_020352_0_1_9"/>
<dbReference type="UniPathway" id="UPA00340">
    <property type="reaction ID" value="UER00458"/>
</dbReference>
<dbReference type="GO" id="GO:0005737">
    <property type="term" value="C:cytoplasm"/>
    <property type="evidence" value="ECO:0007669"/>
    <property type="project" value="UniProtKB-SubCell"/>
</dbReference>
<dbReference type="GO" id="GO:0008776">
    <property type="term" value="F:acetate kinase activity"/>
    <property type="evidence" value="ECO:0007669"/>
    <property type="project" value="UniProtKB-UniRule"/>
</dbReference>
<dbReference type="GO" id="GO:0005524">
    <property type="term" value="F:ATP binding"/>
    <property type="evidence" value="ECO:0007669"/>
    <property type="project" value="UniProtKB-KW"/>
</dbReference>
<dbReference type="GO" id="GO:0000287">
    <property type="term" value="F:magnesium ion binding"/>
    <property type="evidence" value="ECO:0007669"/>
    <property type="project" value="UniProtKB-UniRule"/>
</dbReference>
<dbReference type="GO" id="GO:0006083">
    <property type="term" value="P:acetate metabolic process"/>
    <property type="evidence" value="ECO:0007669"/>
    <property type="project" value="TreeGrafter"/>
</dbReference>
<dbReference type="GO" id="GO:0006085">
    <property type="term" value="P:acetyl-CoA biosynthetic process"/>
    <property type="evidence" value="ECO:0007669"/>
    <property type="project" value="UniProtKB-UniRule"/>
</dbReference>
<dbReference type="CDD" id="cd24010">
    <property type="entry name" value="ASKHA_NBD_AcK_PK"/>
    <property type="match status" value="1"/>
</dbReference>
<dbReference type="Gene3D" id="3.30.420.40">
    <property type="match status" value="2"/>
</dbReference>
<dbReference type="HAMAP" id="MF_00020">
    <property type="entry name" value="Acetate_kinase"/>
    <property type="match status" value="1"/>
</dbReference>
<dbReference type="InterPro" id="IPR004372">
    <property type="entry name" value="Ac/propionate_kinase"/>
</dbReference>
<dbReference type="InterPro" id="IPR000890">
    <property type="entry name" value="Aliphatic_acid_kin_short-chain"/>
</dbReference>
<dbReference type="InterPro" id="IPR023865">
    <property type="entry name" value="Aliphatic_acid_kinase_CS"/>
</dbReference>
<dbReference type="InterPro" id="IPR043129">
    <property type="entry name" value="ATPase_NBD"/>
</dbReference>
<dbReference type="NCBIfam" id="TIGR00016">
    <property type="entry name" value="ackA"/>
    <property type="match status" value="1"/>
</dbReference>
<dbReference type="PANTHER" id="PTHR21060">
    <property type="entry name" value="ACETATE KINASE"/>
    <property type="match status" value="1"/>
</dbReference>
<dbReference type="PANTHER" id="PTHR21060:SF15">
    <property type="entry name" value="ACETATE KINASE-RELATED"/>
    <property type="match status" value="1"/>
</dbReference>
<dbReference type="Pfam" id="PF00871">
    <property type="entry name" value="Acetate_kinase"/>
    <property type="match status" value="1"/>
</dbReference>
<dbReference type="PIRSF" id="PIRSF000722">
    <property type="entry name" value="Acetate_prop_kin"/>
    <property type="match status" value="1"/>
</dbReference>
<dbReference type="PRINTS" id="PR00471">
    <property type="entry name" value="ACETATEKNASE"/>
</dbReference>
<dbReference type="SUPFAM" id="SSF53067">
    <property type="entry name" value="Actin-like ATPase domain"/>
    <property type="match status" value="2"/>
</dbReference>
<dbReference type="PROSITE" id="PS01075">
    <property type="entry name" value="ACETATE_KINASE_1"/>
    <property type="match status" value="1"/>
</dbReference>
<dbReference type="PROSITE" id="PS01076">
    <property type="entry name" value="ACETATE_KINASE_2"/>
    <property type="match status" value="1"/>
</dbReference>
<feature type="chain" id="PRO_1000074192" description="Acetate kinase">
    <location>
        <begin position="1"/>
        <end position="400"/>
    </location>
</feature>
<feature type="active site" description="Proton donor/acceptor" evidence="1">
    <location>
        <position position="147"/>
    </location>
</feature>
<feature type="binding site" evidence="1">
    <location>
        <position position="9"/>
    </location>
    <ligand>
        <name>Mg(2+)</name>
        <dbReference type="ChEBI" id="CHEBI:18420"/>
    </ligand>
</feature>
<feature type="binding site" evidence="1">
    <location>
        <position position="16"/>
    </location>
    <ligand>
        <name>ATP</name>
        <dbReference type="ChEBI" id="CHEBI:30616"/>
    </ligand>
</feature>
<feature type="binding site" evidence="1">
    <location>
        <position position="90"/>
    </location>
    <ligand>
        <name>substrate</name>
    </ligand>
</feature>
<feature type="binding site" evidence="1">
    <location>
        <begin position="207"/>
        <end position="211"/>
    </location>
    <ligand>
        <name>ATP</name>
        <dbReference type="ChEBI" id="CHEBI:30616"/>
    </ligand>
</feature>
<feature type="binding site" evidence="1">
    <location>
        <begin position="282"/>
        <end position="284"/>
    </location>
    <ligand>
        <name>ATP</name>
        <dbReference type="ChEBI" id="CHEBI:30616"/>
    </ligand>
</feature>
<feature type="binding site" evidence="1">
    <location>
        <begin position="330"/>
        <end position="334"/>
    </location>
    <ligand>
        <name>ATP</name>
        <dbReference type="ChEBI" id="CHEBI:30616"/>
    </ligand>
</feature>
<feature type="binding site" evidence="1">
    <location>
        <position position="385"/>
    </location>
    <ligand>
        <name>Mg(2+)</name>
        <dbReference type="ChEBI" id="CHEBI:18420"/>
    </ligand>
</feature>
<feature type="site" description="Transition state stabilizer" evidence="1">
    <location>
        <position position="179"/>
    </location>
</feature>
<feature type="site" description="Transition state stabilizer" evidence="1">
    <location>
        <position position="240"/>
    </location>
</feature>
<reference key="1">
    <citation type="submission" date="2007-06" db="EMBL/GenBank/DDBJ databases">
        <title>Complete sequence of chromosome of Staphylococcus aureus subsp. aureus JH1.</title>
        <authorList>
            <consortium name="US DOE Joint Genome Institute"/>
            <person name="Copeland A."/>
            <person name="Lucas S."/>
            <person name="Lapidus A."/>
            <person name="Barry K."/>
            <person name="Detter J.C."/>
            <person name="Glavina del Rio T."/>
            <person name="Hammon N."/>
            <person name="Israni S."/>
            <person name="Dalin E."/>
            <person name="Tice H."/>
            <person name="Pitluck S."/>
            <person name="Chain P."/>
            <person name="Malfatti S."/>
            <person name="Shin M."/>
            <person name="Vergez L."/>
            <person name="Schmutz J."/>
            <person name="Larimer F."/>
            <person name="Land M."/>
            <person name="Hauser L."/>
            <person name="Kyrpides N."/>
            <person name="Ivanova N."/>
            <person name="Tomasz A."/>
            <person name="Richardson P."/>
        </authorList>
    </citation>
    <scope>NUCLEOTIDE SEQUENCE [LARGE SCALE GENOMIC DNA]</scope>
    <source>
        <strain>JH1</strain>
    </source>
</reference>
<accession>A6U2H8</accession>
<name>ACKA_STAA2</name>
<evidence type="ECO:0000255" key="1">
    <source>
        <dbReference type="HAMAP-Rule" id="MF_00020"/>
    </source>
</evidence>
<organism>
    <name type="scientific">Staphylococcus aureus (strain JH1)</name>
    <dbReference type="NCBI Taxonomy" id="359787"/>
    <lineage>
        <taxon>Bacteria</taxon>
        <taxon>Bacillati</taxon>
        <taxon>Bacillota</taxon>
        <taxon>Bacilli</taxon>
        <taxon>Bacillales</taxon>
        <taxon>Staphylococcaceae</taxon>
        <taxon>Staphylococcus</taxon>
    </lineage>
</organism>
<sequence>MSKLILAINAGSSSLKFQLIRMPEEELVTKGLIERIGLKDSIFTIEVNGEKVKTVQDIKDHVEAVDIMLDAFKAHNIINDINDIDGTGHRVVHGGEKFPESVAITDEVEKEIEELSELAPLHNPANLMGIRAFRKLLPNIPHVAIFDTAFHQTMPEKAYLYSLPYHYYKDYGIRKYGFHGTSHKFVSQRAAEMLDKPVEDLRIISCHIGNGASIAAIDGGKSIDTSMGFTPLAGVTMGTRSGNIDPALIPFIMEKTGKTAEQVLEILNKESGLLGLSGTSSDLRDLSEEAESGKARSQMALDVFASKIHKYIGSYAARMHGVDVIVFTAGIGENSVEIRAKVLEGLEFMGVYWDPKKNENLLRGKEGFINYPHSPVKVVVIPTDEESMIARDVMTFGGLK</sequence>
<comment type="function">
    <text evidence="1">Catalyzes the formation of acetyl phosphate from acetate and ATP. Can also catalyze the reverse reaction.</text>
</comment>
<comment type="catalytic activity">
    <reaction evidence="1">
        <text>acetate + ATP = acetyl phosphate + ADP</text>
        <dbReference type="Rhea" id="RHEA:11352"/>
        <dbReference type="ChEBI" id="CHEBI:22191"/>
        <dbReference type="ChEBI" id="CHEBI:30089"/>
        <dbReference type="ChEBI" id="CHEBI:30616"/>
        <dbReference type="ChEBI" id="CHEBI:456216"/>
        <dbReference type="EC" id="2.7.2.1"/>
    </reaction>
</comment>
<comment type="cofactor">
    <cofactor evidence="1">
        <name>Mg(2+)</name>
        <dbReference type="ChEBI" id="CHEBI:18420"/>
    </cofactor>
    <cofactor evidence="1">
        <name>Mn(2+)</name>
        <dbReference type="ChEBI" id="CHEBI:29035"/>
    </cofactor>
    <text evidence="1">Mg(2+). Can also accept Mn(2+).</text>
</comment>
<comment type="pathway">
    <text evidence="1">Metabolic intermediate biosynthesis; acetyl-CoA biosynthesis; acetyl-CoA from acetate: step 1/2.</text>
</comment>
<comment type="subunit">
    <text evidence="1">Homodimer.</text>
</comment>
<comment type="subcellular location">
    <subcellularLocation>
        <location evidence="1">Cytoplasm</location>
    </subcellularLocation>
</comment>
<comment type="similarity">
    <text evidence="1">Belongs to the acetokinase family.</text>
</comment>